<gene>
    <name type="primary">MOB3A</name>
    <name type="synonym">MOBKL2A</name>
</gene>
<comment type="function">
    <text evidence="1">May regulate the activity of kinases.</text>
</comment>
<comment type="similarity">
    <text evidence="2">Belongs to the MOB1/phocein family.</text>
</comment>
<name>MOB3A_PONAB</name>
<accession>Q5R5Z0</accession>
<organism>
    <name type="scientific">Pongo abelii</name>
    <name type="common">Sumatran orangutan</name>
    <name type="synonym">Pongo pygmaeus abelii</name>
    <dbReference type="NCBI Taxonomy" id="9601"/>
    <lineage>
        <taxon>Eukaryota</taxon>
        <taxon>Metazoa</taxon>
        <taxon>Chordata</taxon>
        <taxon>Craniata</taxon>
        <taxon>Vertebrata</taxon>
        <taxon>Euteleostomi</taxon>
        <taxon>Mammalia</taxon>
        <taxon>Eutheria</taxon>
        <taxon>Euarchontoglires</taxon>
        <taxon>Primates</taxon>
        <taxon>Haplorrhini</taxon>
        <taxon>Catarrhini</taxon>
        <taxon>Hominidae</taxon>
        <taxon>Pongo</taxon>
    </lineage>
</organism>
<reference key="1">
    <citation type="submission" date="2004-11" db="EMBL/GenBank/DDBJ databases">
        <authorList>
            <consortium name="The German cDNA consortium"/>
        </authorList>
    </citation>
    <scope>NUCLEOTIDE SEQUENCE [LARGE SCALE MRNA]</scope>
    <source>
        <tissue>Brain cortex</tissue>
    </source>
</reference>
<evidence type="ECO:0000250" key="1"/>
<evidence type="ECO:0000305" key="2"/>
<dbReference type="EMBL" id="CR860711">
    <property type="protein sequence ID" value="CAH92826.1"/>
    <property type="molecule type" value="mRNA"/>
</dbReference>
<dbReference type="RefSeq" id="NP_001126652.1">
    <property type="nucleotide sequence ID" value="NM_001133180.1"/>
</dbReference>
<dbReference type="SMR" id="Q5R5Z0"/>
<dbReference type="STRING" id="9601.ENSPPYP00000010478"/>
<dbReference type="GeneID" id="100173650"/>
<dbReference type="KEGG" id="pon:100173650"/>
<dbReference type="CTD" id="126308"/>
<dbReference type="eggNOG" id="KOG1903">
    <property type="taxonomic scope" value="Eukaryota"/>
</dbReference>
<dbReference type="InParanoid" id="Q5R5Z0"/>
<dbReference type="OrthoDB" id="8170117at2759"/>
<dbReference type="Proteomes" id="UP000001595">
    <property type="component" value="Unplaced"/>
</dbReference>
<dbReference type="GO" id="GO:0046872">
    <property type="term" value="F:metal ion binding"/>
    <property type="evidence" value="ECO:0007669"/>
    <property type="project" value="UniProtKB-KW"/>
</dbReference>
<dbReference type="FunFam" id="1.20.140.30:FF:000001">
    <property type="entry name" value="MOB kinase activator 1A"/>
    <property type="match status" value="1"/>
</dbReference>
<dbReference type="Gene3D" id="1.20.140.30">
    <property type="entry name" value="MOB kinase activator"/>
    <property type="match status" value="1"/>
</dbReference>
<dbReference type="InterPro" id="IPR005301">
    <property type="entry name" value="MOB_kinase_act_fam"/>
</dbReference>
<dbReference type="InterPro" id="IPR036703">
    <property type="entry name" value="MOB_kinase_act_sf"/>
</dbReference>
<dbReference type="PANTHER" id="PTHR22599">
    <property type="entry name" value="MPS ONE BINDER KINASE ACTIVATOR-LIKE MOB"/>
    <property type="match status" value="1"/>
</dbReference>
<dbReference type="Pfam" id="PF03637">
    <property type="entry name" value="Mob1_phocein"/>
    <property type="match status" value="1"/>
</dbReference>
<dbReference type="SMART" id="SM01388">
    <property type="entry name" value="Mob1_phocein"/>
    <property type="match status" value="1"/>
</dbReference>
<dbReference type="SUPFAM" id="SSF101152">
    <property type="entry name" value="Mob1/phocein"/>
    <property type="match status" value="1"/>
</dbReference>
<sequence>MSNPFLKQVFNKDKTFRPKRKFEPGTQRFELHKKAQASLNAGLDLRLAVQLPPGEDLNDWVTVHVVDFFNRVNLIYGTISDGCTEQSCPVMSGGPKYEYRWQDEHKFRKPTALSAPRYMDLLMDWIEAQINNEDLFPTNVGTPFPKNFLQAVRKILSRLFRVFVHVYIHHFDRIAQMGSEAHVNTCYKHFYYFVKEFGLIDTKELEPLKEMTARMCH</sequence>
<keyword id="KW-0479">Metal-binding</keyword>
<keyword id="KW-1185">Reference proteome</keyword>
<keyword id="KW-0862">Zinc</keyword>
<feature type="chain" id="PRO_0000249711" description="MOB kinase activator 3A">
    <location>
        <begin position="1"/>
        <end position="217"/>
    </location>
</feature>
<feature type="binding site" evidence="1">
    <location>
        <position position="83"/>
    </location>
    <ligand>
        <name>Zn(2+)</name>
        <dbReference type="ChEBI" id="CHEBI:29105"/>
    </ligand>
</feature>
<feature type="binding site" evidence="1">
    <location>
        <position position="88"/>
    </location>
    <ligand>
        <name>Zn(2+)</name>
        <dbReference type="ChEBI" id="CHEBI:29105"/>
    </ligand>
</feature>
<feature type="binding site" evidence="1">
    <location>
        <position position="165"/>
    </location>
    <ligand>
        <name>Zn(2+)</name>
        <dbReference type="ChEBI" id="CHEBI:29105"/>
    </ligand>
</feature>
<feature type="binding site" evidence="1">
    <location>
        <position position="170"/>
    </location>
    <ligand>
        <name>Zn(2+)</name>
        <dbReference type="ChEBI" id="CHEBI:29105"/>
    </ligand>
</feature>
<protein>
    <recommendedName>
        <fullName>MOB kinase activator 3A</fullName>
    </recommendedName>
    <alternativeName>
        <fullName>Mob1 homolog 2A</fullName>
    </alternativeName>
    <alternativeName>
        <fullName>Mps one binder kinase activator-like 2A</fullName>
    </alternativeName>
</protein>
<proteinExistence type="evidence at transcript level"/>